<name>GIMA8_RAT</name>
<keyword id="KW-0175">Coiled coil</keyword>
<keyword id="KW-0963">Cytoplasm</keyword>
<keyword id="KW-0256">Endoplasmic reticulum</keyword>
<keyword id="KW-0333">Golgi apparatus</keyword>
<keyword id="KW-0342">GTP-binding</keyword>
<keyword id="KW-0496">Mitochondrion</keyword>
<keyword id="KW-0547">Nucleotide-binding</keyword>
<keyword id="KW-1185">Reference proteome</keyword>
<keyword id="KW-0677">Repeat</keyword>
<feature type="chain" id="PRO_0000341972" description="GTPase IMAP family member 8">
    <location>
        <begin position="1"/>
        <end position="688"/>
    </location>
</feature>
<feature type="domain" description="AIG1-type G 1" evidence="5">
    <location>
        <begin position="46"/>
        <end position="246"/>
    </location>
</feature>
<feature type="domain" description="AIG1-type G 2" evidence="5">
    <location>
        <begin position="281"/>
        <end position="471"/>
    </location>
</feature>
<feature type="domain" description="AIG1-type G 3" evidence="5">
    <location>
        <begin position="472"/>
        <end position="681"/>
    </location>
</feature>
<feature type="region of interest" description="Disordered" evidence="6">
    <location>
        <begin position="22"/>
        <end position="44"/>
    </location>
</feature>
<feature type="region of interest" description="G1" evidence="5">
    <location>
        <begin position="55"/>
        <end position="62"/>
    </location>
</feature>
<feature type="region of interest" description="G2" evidence="5">
    <location>
        <begin position="82"/>
        <end position="86"/>
    </location>
</feature>
<feature type="region of interest" description="G3" evidence="5">
    <location>
        <begin position="103"/>
        <end position="106"/>
    </location>
</feature>
<feature type="region of interest" description="G4" evidence="5">
    <location>
        <begin position="171"/>
        <end position="174"/>
    </location>
</feature>
<feature type="region of interest" description="G5" evidence="5">
    <location>
        <begin position="207"/>
        <end position="209"/>
    </location>
</feature>
<feature type="compositionally biased region" description="Polar residues" evidence="6">
    <location>
        <begin position="35"/>
        <end position="44"/>
    </location>
</feature>
<feature type="binding site" evidence="3">
    <location>
        <begin position="55"/>
        <end position="63"/>
    </location>
    <ligand>
        <name>GTP</name>
        <dbReference type="ChEBI" id="CHEBI:37565"/>
    </ligand>
</feature>
<feature type="binding site" evidence="4">
    <location>
        <position position="76"/>
    </location>
    <ligand>
        <name>GTP</name>
        <dbReference type="ChEBI" id="CHEBI:37565"/>
    </ligand>
</feature>
<feature type="binding site" evidence="3">
    <location>
        <begin position="172"/>
        <end position="174"/>
    </location>
    <ligand>
        <name>GTP</name>
        <dbReference type="ChEBI" id="CHEBI:37565"/>
    </ligand>
</feature>
<feature type="binding site" evidence="3">
    <location>
        <position position="208"/>
    </location>
    <ligand>
        <name>GTP</name>
        <dbReference type="ChEBI" id="CHEBI:37565"/>
    </ligand>
</feature>
<feature type="sequence conflict" description="In Ref. 1; CAG17880." evidence="8" ref="1">
    <original>I</original>
    <variation>F</variation>
    <location>
        <position position="151"/>
    </location>
</feature>
<feature type="sequence conflict" description="In Ref. 1; CAG17880." evidence="8" ref="1">
    <original>T</original>
    <variation>A</variation>
    <location>
        <position position="243"/>
    </location>
</feature>
<feature type="sequence conflict" description="In Ref. 1; CAG17880." evidence="8" ref="1">
    <original>E</original>
    <variation>G</variation>
    <location>
        <position position="417"/>
    </location>
</feature>
<accession>Q4KLG2</accession>
<accession>Q3LF72</accession>
<proteinExistence type="evidence at transcript level"/>
<dbReference type="EMBL" id="AJ633685">
    <property type="protein sequence ID" value="CAG17880.1"/>
    <property type="molecule type" value="mRNA"/>
</dbReference>
<dbReference type="EMBL" id="DQ125335">
    <property type="protein sequence ID" value="ABB03698.1"/>
    <property type="molecule type" value="mRNA"/>
</dbReference>
<dbReference type="EMBL" id="DQ125336">
    <property type="protein sequence ID" value="ABB03699.1"/>
    <property type="molecule type" value="mRNA"/>
</dbReference>
<dbReference type="EMBL" id="BC099228">
    <property type="protein sequence ID" value="AAH99228.1"/>
    <property type="molecule type" value="mRNA"/>
</dbReference>
<dbReference type="RefSeq" id="NP_001029095.1">
    <property type="nucleotide sequence ID" value="NM_001033923.1"/>
</dbReference>
<dbReference type="SMR" id="Q4KLG2"/>
<dbReference type="FunCoup" id="Q4KLG2">
    <property type="interactions" value="469"/>
</dbReference>
<dbReference type="STRING" id="10116.ENSRNOP00000055946"/>
<dbReference type="PhosphoSitePlus" id="Q4KLG2"/>
<dbReference type="PaxDb" id="10116-ENSRNOP00000055946"/>
<dbReference type="Ensembl" id="ENSRNOT00000059173.4">
    <property type="protein sequence ID" value="ENSRNOP00000055946.4"/>
    <property type="gene ID" value="ENSRNOG00000020169.7"/>
</dbReference>
<dbReference type="GeneID" id="500112"/>
<dbReference type="KEGG" id="rno:500112"/>
<dbReference type="UCSC" id="RGD:1564570">
    <property type="organism name" value="rat"/>
</dbReference>
<dbReference type="AGR" id="RGD:1564570"/>
<dbReference type="CTD" id="155038"/>
<dbReference type="RGD" id="1564570">
    <property type="gene designation" value="Gimap8"/>
</dbReference>
<dbReference type="eggNOG" id="ENOG502RB0C">
    <property type="taxonomic scope" value="Eukaryota"/>
</dbReference>
<dbReference type="GeneTree" id="ENSGT00940000162462"/>
<dbReference type="HOGENOM" id="CLU_010468_5_1_1"/>
<dbReference type="InParanoid" id="Q4KLG2"/>
<dbReference type="OMA" id="CIFREKE"/>
<dbReference type="OrthoDB" id="8954335at2759"/>
<dbReference type="PhylomeDB" id="Q4KLG2"/>
<dbReference type="TreeFam" id="TF330845"/>
<dbReference type="PRO" id="PR:Q4KLG2"/>
<dbReference type="Proteomes" id="UP000002494">
    <property type="component" value="Chromosome 4"/>
</dbReference>
<dbReference type="GO" id="GO:0005829">
    <property type="term" value="C:cytosol"/>
    <property type="evidence" value="ECO:0007669"/>
    <property type="project" value="UniProtKB-SubCell"/>
</dbReference>
<dbReference type="GO" id="GO:0005783">
    <property type="term" value="C:endoplasmic reticulum"/>
    <property type="evidence" value="ECO:0000318"/>
    <property type="project" value="GO_Central"/>
</dbReference>
<dbReference type="GO" id="GO:0005794">
    <property type="term" value="C:Golgi apparatus"/>
    <property type="evidence" value="ECO:0007669"/>
    <property type="project" value="UniProtKB-SubCell"/>
</dbReference>
<dbReference type="GO" id="GO:0005739">
    <property type="term" value="C:mitochondrion"/>
    <property type="evidence" value="ECO:0007669"/>
    <property type="project" value="UniProtKB-SubCell"/>
</dbReference>
<dbReference type="GO" id="GO:0005525">
    <property type="term" value="F:GTP binding"/>
    <property type="evidence" value="ECO:0007669"/>
    <property type="project" value="UniProtKB-KW"/>
</dbReference>
<dbReference type="GO" id="GO:0070232">
    <property type="term" value="P:regulation of T cell apoptotic process"/>
    <property type="evidence" value="ECO:0000266"/>
    <property type="project" value="RGD"/>
</dbReference>
<dbReference type="CDD" id="cd01852">
    <property type="entry name" value="AIG1"/>
    <property type="match status" value="2"/>
</dbReference>
<dbReference type="FunFam" id="3.40.50.300:FF:000536">
    <property type="entry name" value="GTPase IMAP family member 8"/>
    <property type="match status" value="3"/>
</dbReference>
<dbReference type="Gene3D" id="3.40.50.300">
    <property type="entry name" value="P-loop containing nucleotide triphosphate hydrolases"/>
    <property type="match status" value="3"/>
</dbReference>
<dbReference type="InterPro" id="IPR006703">
    <property type="entry name" value="G_AIG1"/>
</dbReference>
<dbReference type="InterPro" id="IPR045058">
    <property type="entry name" value="GIMA/IAN/Toc"/>
</dbReference>
<dbReference type="InterPro" id="IPR027417">
    <property type="entry name" value="P-loop_NTPase"/>
</dbReference>
<dbReference type="PANTHER" id="PTHR10903:SF73">
    <property type="entry name" value="GTPASE IMAP FAMILY MEMBER 8"/>
    <property type="match status" value="1"/>
</dbReference>
<dbReference type="PANTHER" id="PTHR10903">
    <property type="entry name" value="GTPASE, IMAP FAMILY MEMBER-RELATED"/>
    <property type="match status" value="1"/>
</dbReference>
<dbReference type="Pfam" id="PF04548">
    <property type="entry name" value="AIG1"/>
    <property type="match status" value="3"/>
</dbReference>
<dbReference type="SUPFAM" id="SSF52540">
    <property type="entry name" value="P-loop containing nucleoside triphosphate hydrolases"/>
    <property type="match status" value="3"/>
</dbReference>
<dbReference type="PROSITE" id="PS51720">
    <property type="entry name" value="G_AIG1"/>
    <property type="match status" value="3"/>
</dbReference>
<comment type="function">
    <text evidence="1">Exerts an anti-apoptotic effect in the immune system and is involved in responses to infections.</text>
</comment>
<comment type="subcellular location">
    <subcellularLocation>
        <location evidence="1">Endoplasmic reticulum</location>
    </subcellularLocation>
    <subcellularLocation>
        <location evidence="1">Golgi apparatus</location>
    </subcellularLocation>
    <subcellularLocation>
        <location evidence="1">Mitochondrion</location>
    </subcellularLocation>
    <subcellularLocation>
        <location evidence="2">Cytoplasm</location>
        <location evidence="2">Cytosol</location>
    </subcellularLocation>
</comment>
<comment type="tissue specificity">
    <text evidence="7">Spleen, thymus and T-cells. Greatly reduced in T-cells from lymphopenic rats.</text>
</comment>
<comment type="similarity">
    <text evidence="8">Belongs to the TRAFAC class TrmE-Era-EngA-EngB-Septin-like GTPase superfamily. AIG1/Toc34/Toc159-like paraseptin GTPase family. IAN subfamily.</text>
</comment>
<organism>
    <name type="scientific">Rattus norvegicus</name>
    <name type="common">Rat</name>
    <dbReference type="NCBI Taxonomy" id="10116"/>
    <lineage>
        <taxon>Eukaryota</taxon>
        <taxon>Metazoa</taxon>
        <taxon>Chordata</taxon>
        <taxon>Craniata</taxon>
        <taxon>Vertebrata</taxon>
        <taxon>Euteleostomi</taxon>
        <taxon>Mammalia</taxon>
        <taxon>Eutheria</taxon>
        <taxon>Euarchontoglires</taxon>
        <taxon>Glires</taxon>
        <taxon>Rodentia</taxon>
        <taxon>Myomorpha</taxon>
        <taxon>Muroidea</taxon>
        <taxon>Muridae</taxon>
        <taxon>Murinae</taxon>
        <taxon>Rattus</taxon>
    </lineage>
</organism>
<sequence length="688" mass="77072">MATSSHQGAAAGSQMEHRLCETSIGQGERPRASRGQESNFKQSQGTSTLRLLLLGKQGAGKSATGNTILGKAVFESRFSHHMVTKRCQSESVSVRGKQVIVIDTPDLFSSLGCPEVQQQNLRQCLDLLADPYVLLLVTPIGHSTEEDKKTIEGIQGVFGPQAYRHMIVVFTREDELGEDTLQNHIESKKYLKKLIENIGSQRCCAFNNKADKKQQELQVSQFLDAIEFLMMESPGTYFEPLKTENSGVQGCGTGVTYKGDNLCGSKKRQPQITGPGWDRDTPELRVLLMGKRGVGKSAAGNSILGKQVFKTQFSEKQRVTEAFASHSRLWNQKKFLIIDSPEISSWKLDESDVKEHTFPGPHAFLLVTPLGSSLKSGDSVFSIIKRIFGEKFIKFTIILFTRKEDFEGQDLDTFTKENDALCNLIQIFEGRYAVFNYRATVEEEQSQVGKLLSQIESVVQHHNNKPCVIREKELLNIILLGRSGVGKSATGNTILGRPAFVSQLRAQPVTSRSQSGRRTLDWQDIVVVDTPSLNQMSGTEKNPAQLKKEIKQCLLQNCEEGMKVFVLVFQLGRFTQEDEAVVEQLEASFEENIMKYMIVLFTRKEDLGDGDLYDFTNNTKNKVLKRIFKKCKGRVCAFNNKETGEDQETQVKALLTIANDLKRSYDEHSTSWMDQLKSAVGQITTVFK</sequence>
<reference key="1">
    <citation type="journal article" date="2005" name="Int. Immunol.">
        <title>Expression of the Ian family of putative GTPases during T cell development and description of an Ian with three sets of GTP/GDP-binding motifs.</title>
        <authorList>
            <person name="Dion C."/>
            <person name="Carter C."/>
            <person name="Hepburn L."/>
            <person name="Coadwell W.J."/>
            <person name="Morgan G."/>
            <person name="Graham M."/>
            <person name="Pugh N."/>
            <person name="Anderson G."/>
            <person name="Butcher G.W."/>
            <person name="Miller J.R."/>
        </authorList>
    </citation>
    <scope>NUCLEOTIDE SEQUENCE [MRNA]</scope>
    <scope>TISSUE SPECIFICITY</scope>
    <source>
        <strain>PVG.RT1A</strain>
        <tissue>Thymus</tissue>
    </source>
</reference>
<reference key="2">
    <citation type="submission" date="2005-07" db="EMBL/GenBank/DDBJ databases">
        <title>Expression of the Gimap gene cluster is reduced in the type 1 diabetes BB lymphopenic rat.</title>
        <authorList>
            <person name="Rutledge E.A."/>
            <person name="Van Yserloo B."/>
            <person name="Fuller J.M."/>
            <person name="Moralejo D.H."/>
            <person name="Ettinger R.A."/>
            <person name="Gaur P."/>
            <person name="Peterson M.R."/>
            <person name="Hoehna J.L."/>
            <person name="Lernmark A."/>
        </authorList>
    </citation>
    <scope>NUCLEOTIDE SEQUENCE [MRNA]</scope>
    <source>
        <strain>BBDR.lyp-</strain>
    </source>
</reference>
<reference key="3">
    <citation type="journal article" date="2004" name="Genome Res.">
        <title>The status, quality, and expansion of the NIH full-length cDNA project: the Mammalian Gene Collection (MGC).</title>
        <authorList>
            <consortium name="The MGC Project Team"/>
        </authorList>
    </citation>
    <scope>NUCLEOTIDE SEQUENCE [LARGE SCALE MRNA]</scope>
    <source>
        <tissue>Thymus</tissue>
    </source>
</reference>
<protein>
    <recommendedName>
        <fullName>GTPase IMAP family member 8</fullName>
    </recommendedName>
    <alternativeName>
        <fullName>Immune-associated nucleotide-binding protein 9</fullName>
        <shortName>IAN-9</shortName>
    </alternativeName>
    <alternativeName>
        <fullName>Protein IanT</fullName>
    </alternativeName>
</protein>
<gene>
    <name type="primary">Gimap8</name>
    <name type="synonym">Ian9</name>
    <name type="synonym">Iant</name>
</gene>
<evidence type="ECO:0000250" key="1">
    <source>
        <dbReference type="UniProtKB" id="Q75N62"/>
    </source>
</evidence>
<evidence type="ECO:0000250" key="2">
    <source>
        <dbReference type="UniProtKB" id="Q8ND71"/>
    </source>
</evidence>
<evidence type="ECO:0000250" key="3">
    <source>
        <dbReference type="UniProtKB" id="Q8WWP7"/>
    </source>
</evidence>
<evidence type="ECO:0000250" key="4">
    <source>
        <dbReference type="UniProtKB" id="Q9UG22"/>
    </source>
</evidence>
<evidence type="ECO:0000255" key="5">
    <source>
        <dbReference type="PROSITE-ProRule" id="PRU01057"/>
    </source>
</evidence>
<evidence type="ECO:0000256" key="6">
    <source>
        <dbReference type="SAM" id="MobiDB-lite"/>
    </source>
</evidence>
<evidence type="ECO:0000269" key="7">
    <source>
    </source>
</evidence>
<evidence type="ECO:0000305" key="8"/>